<keyword id="KW-0227">DNA damage</keyword>
<keyword id="KW-0233">DNA recombination</keyword>
<keyword id="KW-0234">DNA repair</keyword>
<keyword id="KW-0479">Metal-binding</keyword>
<keyword id="KW-0862">Zinc</keyword>
<keyword id="KW-0863">Zinc-finger</keyword>
<protein>
    <recommendedName>
        <fullName evidence="1">Recombination protein RecR</fullName>
    </recommendedName>
</protein>
<name>RECR_NEIM0</name>
<accession>A9LZB7</accession>
<dbReference type="EMBL" id="CP000381">
    <property type="protein sequence ID" value="ABX73293.1"/>
    <property type="molecule type" value="Genomic_DNA"/>
</dbReference>
<dbReference type="RefSeq" id="WP_002232485.1">
    <property type="nucleotide sequence ID" value="NC_010120.1"/>
</dbReference>
<dbReference type="SMR" id="A9LZB7"/>
<dbReference type="KEGG" id="nmn:NMCC_1118"/>
<dbReference type="HOGENOM" id="CLU_060739_1_2_4"/>
<dbReference type="Proteomes" id="UP000001177">
    <property type="component" value="Chromosome"/>
</dbReference>
<dbReference type="GO" id="GO:0003677">
    <property type="term" value="F:DNA binding"/>
    <property type="evidence" value="ECO:0007669"/>
    <property type="project" value="UniProtKB-UniRule"/>
</dbReference>
<dbReference type="GO" id="GO:0008270">
    <property type="term" value="F:zinc ion binding"/>
    <property type="evidence" value="ECO:0007669"/>
    <property type="project" value="UniProtKB-KW"/>
</dbReference>
<dbReference type="GO" id="GO:0006310">
    <property type="term" value="P:DNA recombination"/>
    <property type="evidence" value="ECO:0007669"/>
    <property type="project" value="UniProtKB-UniRule"/>
</dbReference>
<dbReference type="GO" id="GO:0006281">
    <property type="term" value="P:DNA repair"/>
    <property type="evidence" value="ECO:0007669"/>
    <property type="project" value="UniProtKB-UniRule"/>
</dbReference>
<dbReference type="CDD" id="cd01025">
    <property type="entry name" value="TOPRIM_recR"/>
    <property type="match status" value="1"/>
</dbReference>
<dbReference type="Gene3D" id="3.40.1360.10">
    <property type="match status" value="1"/>
</dbReference>
<dbReference type="Gene3D" id="1.10.8.420">
    <property type="entry name" value="RecR Domain 1"/>
    <property type="match status" value="1"/>
</dbReference>
<dbReference type="HAMAP" id="MF_00017">
    <property type="entry name" value="RecR"/>
    <property type="match status" value="1"/>
</dbReference>
<dbReference type="InterPro" id="IPR000093">
    <property type="entry name" value="DNA_Rcmb_RecR"/>
</dbReference>
<dbReference type="InterPro" id="IPR023627">
    <property type="entry name" value="Rcmb_RecR"/>
</dbReference>
<dbReference type="InterPro" id="IPR015967">
    <property type="entry name" value="Rcmb_RecR_Znf"/>
</dbReference>
<dbReference type="InterPro" id="IPR006171">
    <property type="entry name" value="TOPRIM_dom"/>
</dbReference>
<dbReference type="InterPro" id="IPR034137">
    <property type="entry name" value="TOPRIM_RecR"/>
</dbReference>
<dbReference type="NCBIfam" id="TIGR00615">
    <property type="entry name" value="recR"/>
    <property type="match status" value="1"/>
</dbReference>
<dbReference type="PANTHER" id="PTHR30446">
    <property type="entry name" value="RECOMBINATION PROTEIN RECR"/>
    <property type="match status" value="1"/>
</dbReference>
<dbReference type="PANTHER" id="PTHR30446:SF0">
    <property type="entry name" value="RECOMBINATION PROTEIN RECR"/>
    <property type="match status" value="1"/>
</dbReference>
<dbReference type="Pfam" id="PF21175">
    <property type="entry name" value="RecR_C"/>
    <property type="match status" value="1"/>
</dbReference>
<dbReference type="Pfam" id="PF21176">
    <property type="entry name" value="RecR_HhH"/>
    <property type="match status" value="1"/>
</dbReference>
<dbReference type="Pfam" id="PF02132">
    <property type="entry name" value="RecR_ZnF"/>
    <property type="match status" value="1"/>
</dbReference>
<dbReference type="Pfam" id="PF13662">
    <property type="entry name" value="Toprim_4"/>
    <property type="match status" value="1"/>
</dbReference>
<dbReference type="SUPFAM" id="SSF111304">
    <property type="entry name" value="Recombination protein RecR"/>
    <property type="match status" value="1"/>
</dbReference>
<dbReference type="PROSITE" id="PS01300">
    <property type="entry name" value="RECR"/>
    <property type="match status" value="1"/>
</dbReference>
<dbReference type="PROSITE" id="PS50880">
    <property type="entry name" value="TOPRIM"/>
    <property type="match status" value="1"/>
</dbReference>
<evidence type="ECO:0000255" key="1">
    <source>
        <dbReference type="HAMAP-Rule" id="MF_00017"/>
    </source>
</evidence>
<proteinExistence type="inferred from homology"/>
<sequence length="205" mass="22333">MSHKKQDAFQGLIDALKVLPNVGPKSAQRIAYHLLQHKRKEAEKLVDALQTALKQVHHCAMCNTFCEGGLCDICADETRDGRRLMVVHMPADVSNMEAANCHDGLYFVLMGQINTALGMDVSAIALDRLAQRLGGGEVEEIIIATAFTAEGNATAYVLSEFFKNLPYKVSRLSQGIPLGGELEYVDAGTLAQAVYERRLIKEGGA</sequence>
<organism>
    <name type="scientific">Neisseria meningitidis serogroup C (strain 053442)</name>
    <dbReference type="NCBI Taxonomy" id="374833"/>
    <lineage>
        <taxon>Bacteria</taxon>
        <taxon>Pseudomonadati</taxon>
        <taxon>Pseudomonadota</taxon>
        <taxon>Betaproteobacteria</taxon>
        <taxon>Neisseriales</taxon>
        <taxon>Neisseriaceae</taxon>
        <taxon>Neisseria</taxon>
    </lineage>
</organism>
<reference key="1">
    <citation type="journal article" date="2008" name="Genomics">
        <title>Characterization of ST-4821 complex, a unique Neisseria meningitidis clone.</title>
        <authorList>
            <person name="Peng J."/>
            <person name="Yang L."/>
            <person name="Yang F."/>
            <person name="Yang J."/>
            <person name="Yan Y."/>
            <person name="Nie H."/>
            <person name="Zhang X."/>
            <person name="Xiong Z."/>
            <person name="Jiang Y."/>
            <person name="Cheng F."/>
            <person name="Xu X."/>
            <person name="Chen S."/>
            <person name="Sun L."/>
            <person name="Li W."/>
            <person name="Shen Y."/>
            <person name="Shao Z."/>
            <person name="Liang X."/>
            <person name="Xu J."/>
            <person name="Jin Q."/>
        </authorList>
    </citation>
    <scope>NUCLEOTIDE SEQUENCE [LARGE SCALE GENOMIC DNA]</scope>
    <source>
        <strain>053442</strain>
    </source>
</reference>
<gene>
    <name evidence="1" type="primary">recR</name>
    <name type="ordered locus">NMCC_1118</name>
</gene>
<comment type="function">
    <text evidence="1">May play a role in DNA repair. It seems to be involved in an RecBC-independent recombinational process of DNA repair. It may act with RecF and RecO.</text>
</comment>
<comment type="similarity">
    <text evidence="1">Belongs to the RecR family.</text>
</comment>
<feature type="chain" id="PRO_1000195401" description="Recombination protein RecR">
    <location>
        <begin position="1"/>
        <end position="205"/>
    </location>
</feature>
<feature type="domain" description="Toprim" evidence="1">
    <location>
        <begin position="82"/>
        <end position="177"/>
    </location>
</feature>
<feature type="zinc finger region" description="C4-type" evidence="1">
    <location>
        <begin position="59"/>
        <end position="74"/>
    </location>
</feature>